<organism>
    <name type="scientific">Borrelia recurrentis (strain A1)</name>
    <dbReference type="NCBI Taxonomy" id="412418"/>
    <lineage>
        <taxon>Bacteria</taxon>
        <taxon>Pseudomonadati</taxon>
        <taxon>Spirochaetota</taxon>
        <taxon>Spirochaetia</taxon>
        <taxon>Spirochaetales</taxon>
        <taxon>Borreliaceae</taxon>
        <taxon>Borrelia</taxon>
    </lineage>
</organism>
<accession>B5RQS6</accession>
<gene>
    <name evidence="1" type="primary">rsgA</name>
    <name type="ordered locus">BRE_101</name>
</gene>
<protein>
    <recommendedName>
        <fullName evidence="1">Small ribosomal subunit biogenesis GTPase RsgA</fullName>
        <ecNumber evidence="1">3.6.1.-</ecNumber>
    </recommendedName>
</protein>
<evidence type="ECO:0000255" key="1">
    <source>
        <dbReference type="HAMAP-Rule" id="MF_01820"/>
    </source>
</evidence>
<evidence type="ECO:0000255" key="2">
    <source>
        <dbReference type="PROSITE-ProRule" id="PRU01058"/>
    </source>
</evidence>
<reference key="1">
    <citation type="journal article" date="2008" name="PLoS Genet.">
        <title>The genome of Borrelia recurrentis, the agent of deadly louse-borne relapsing fever, is a degraded subset of tick-borne Borrelia duttonii.</title>
        <authorList>
            <person name="Lescot M."/>
            <person name="Audic S."/>
            <person name="Robert C."/>
            <person name="Nguyen T.T."/>
            <person name="Blanc G."/>
            <person name="Cutler S.J."/>
            <person name="Wincker P."/>
            <person name="Couloux A."/>
            <person name="Claverie J.-M."/>
            <person name="Raoult D."/>
            <person name="Drancourt M."/>
        </authorList>
    </citation>
    <scope>NUCLEOTIDE SEQUENCE [LARGE SCALE GENOMIC DNA]</scope>
    <source>
        <strain>A1</strain>
    </source>
</reference>
<feature type="chain" id="PRO_1000188040" description="Small ribosomal subunit biogenesis GTPase RsgA">
    <location>
        <begin position="1"/>
        <end position="313"/>
    </location>
</feature>
<feature type="domain" description="CP-type G" evidence="2">
    <location>
        <begin position="80"/>
        <end position="237"/>
    </location>
</feature>
<feature type="binding site" evidence="1">
    <location>
        <begin position="129"/>
        <end position="132"/>
    </location>
    <ligand>
        <name>GTP</name>
        <dbReference type="ChEBI" id="CHEBI:37565"/>
    </ligand>
</feature>
<feature type="binding site" evidence="1">
    <location>
        <begin position="180"/>
        <end position="188"/>
    </location>
    <ligand>
        <name>GTP</name>
        <dbReference type="ChEBI" id="CHEBI:37565"/>
    </ligand>
</feature>
<feature type="binding site" evidence="1">
    <location>
        <position position="261"/>
    </location>
    <ligand>
        <name>Zn(2+)</name>
        <dbReference type="ChEBI" id="CHEBI:29105"/>
    </ligand>
</feature>
<feature type="binding site" evidence="1">
    <location>
        <position position="266"/>
    </location>
    <ligand>
        <name>Zn(2+)</name>
        <dbReference type="ChEBI" id="CHEBI:29105"/>
    </ligand>
</feature>
<feature type="binding site" evidence="1">
    <location>
        <position position="268"/>
    </location>
    <ligand>
        <name>Zn(2+)</name>
        <dbReference type="ChEBI" id="CHEBI:29105"/>
    </ligand>
</feature>
<feature type="binding site" evidence="1">
    <location>
        <position position="274"/>
    </location>
    <ligand>
        <name>Zn(2+)</name>
        <dbReference type="ChEBI" id="CHEBI:29105"/>
    </ligand>
</feature>
<dbReference type="EC" id="3.6.1.-" evidence="1"/>
<dbReference type="EMBL" id="CP000993">
    <property type="protein sequence ID" value="ACH94360.1"/>
    <property type="molecule type" value="Genomic_DNA"/>
</dbReference>
<dbReference type="RefSeq" id="WP_012537870.1">
    <property type="nucleotide sequence ID" value="NZ_CP169983.1"/>
</dbReference>
<dbReference type="SMR" id="B5RQS6"/>
<dbReference type="KEGG" id="bre:BRE_101"/>
<dbReference type="HOGENOM" id="CLU_033617_2_1_12"/>
<dbReference type="Proteomes" id="UP000000612">
    <property type="component" value="Chromosome"/>
</dbReference>
<dbReference type="GO" id="GO:0005737">
    <property type="term" value="C:cytoplasm"/>
    <property type="evidence" value="ECO:0007669"/>
    <property type="project" value="UniProtKB-SubCell"/>
</dbReference>
<dbReference type="GO" id="GO:0005525">
    <property type="term" value="F:GTP binding"/>
    <property type="evidence" value="ECO:0007669"/>
    <property type="project" value="UniProtKB-UniRule"/>
</dbReference>
<dbReference type="GO" id="GO:0003924">
    <property type="term" value="F:GTPase activity"/>
    <property type="evidence" value="ECO:0007669"/>
    <property type="project" value="UniProtKB-UniRule"/>
</dbReference>
<dbReference type="GO" id="GO:0046872">
    <property type="term" value="F:metal ion binding"/>
    <property type="evidence" value="ECO:0007669"/>
    <property type="project" value="UniProtKB-KW"/>
</dbReference>
<dbReference type="GO" id="GO:0019843">
    <property type="term" value="F:rRNA binding"/>
    <property type="evidence" value="ECO:0007669"/>
    <property type="project" value="UniProtKB-KW"/>
</dbReference>
<dbReference type="GO" id="GO:0042274">
    <property type="term" value="P:ribosomal small subunit biogenesis"/>
    <property type="evidence" value="ECO:0007669"/>
    <property type="project" value="UniProtKB-UniRule"/>
</dbReference>
<dbReference type="CDD" id="cd01854">
    <property type="entry name" value="YjeQ_EngC"/>
    <property type="match status" value="1"/>
</dbReference>
<dbReference type="Gene3D" id="3.40.50.300">
    <property type="entry name" value="P-loop containing nucleotide triphosphate hydrolases"/>
    <property type="match status" value="1"/>
</dbReference>
<dbReference type="Gene3D" id="1.10.40.50">
    <property type="entry name" value="Probable gtpase engc, domain 3"/>
    <property type="match status" value="1"/>
</dbReference>
<dbReference type="HAMAP" id="MF_01820">
    <property type="entry name" value="GTPase_RsgA"/>
    <property type="match status" value="1"/>
</dbReference>
<dbReference type="InterPro" id="IPR030378">
    <property type="entry name" value="G_CP_dom"/>
</dbReference>
<dbReference type="InterPro" id="IPR027417">
    <property type="entry name" value="P-loop_NTPase"/>
</dbReference>
<dbReference type="InterPro" id="IPR004881">
    <property type="entry name" value="Ribosome_biogen_GTPase_RsgA"/>
</dbReference>
<dbReference type="InterPro" id="IPR010914">
    <property type="entry name" value="RsgA_GTPase_dom"/>
</dbReference>
<dbReference type="NCBIfam" id="TIGR00157">
    <property type="entry name" value="ribosome small subunit-dependent GTPase A"/>
    <property type="match status" value="1"/>
</dbReference>
<dbReference type="PANTHER" id="PTHR32120">
    <property type="entry name" value="SMALL RIBOSOMAL SUBUNIT BIOGENESIS GTPASE RSGA"/>
    <property type="match status" value="1"/>
</dbReference>
<dbReference type="PANTHER" id="PTHR32120:SF11">
    <property type="entry name" value="SMALL RIBOSOMAL SUBUNIT BIOGENESIS GTPASE RSGA 1, MITOCHONDRIAL-RELATED"/>
    <property type="match status" value="1"/>
</dbReference>
<dbReference type="Pfam" id="PF03193">
    <property type="entry name" value="RsgA_GTPase"/>
    <property type="match status" value="1"/>
</dbReference>
<dbReference type="SUPFAM" id="SSF52540">
    <property type="entry name" value="P-loop containing nucleoside triphosphate hydrolases"/>
    <property type="match status" value="1"/>
</dbReference>
<dbReference type="PROSITE" id="PS50936">
    <property type="entry name" value="ENGC_GTPASE"/>
    <property type="match status" value="1"/>
</dbReference>
<dbReference type="PROSITE" id="PS51721">
    <property type="entry name" value="G_CP"/>
    <property type="match status" value="1"/>
</dbReference>
<name>RSGA_BORRA</name>
<proteinExistence type="inferred from homology"/>
<keyword id="KW-0963">Cytoplasm</keyword>
<keyword id="KW-0342">GTP-binding</keyword>
<keyword id="KW-0378">Hydrolase</keyword>
<keyword id="KW-0479">Metal-binding</keyword>
<keyword id="KW-0547">Nucleotide-binding</keyword>
<keyword id="KW-0690">Ribosome biogenesis</keyword>
<keyword id="KW-0694">RNA-binding</keyword>
<keyword id="KW-0699">rRNA-binding</keyword>
<keyword id="KW-0862">Zinc</keyword>
<comment type="function">
    <text evidence="1">One of several proteins that assist in the late maturation steps of the functional core of the 30S ribosomal subunit. Helps release RbfA from mature subunits. May play a role in the assembly of ribosomal proteins into the subunit. Circularly permuted GTPase that catalyzes slow GTP hydrolysis, GTPase activity is stimulated by the 30S ribosomal subunit.</text>
</comment>
<comment type="cofactor">
    <cofactor evidence="1">
        <name>Zn(2+)</name>
        <dbReference type="ChEBI" id="CHEBI:29105"/>
    </cofactor>
    <text evidence="1">Binds 1 zinc ion per subunit.</text>
</comment>
<comment type="subunit">
    <text evidence="1">Monomer. Associates with 30S ribosomal subunit, binds 16S rRNA.</text>
</comment>
<comment type="subcellular location">
    <subcellularLocation>
        <location evidence="1">Cytoplasm</location>
    </subcellularLocation>
</comment>
<comment type="similarity">
    <text evidence="1">Belongs to the TRAFAC class YlqF/YawG GTPase family. RsgA subfamily.</text>
</comment>
<sequence>MNSSTFEVLWGVNNIYSVVEVNTNTVYEGVIKGKFLNTREKEYSPLVPGDFVCGDIYDEHKVYIKERMERRNVFWRYNKKVALRQVIVSNIDNILIVSSATLPEFKNSFIDRTLIVAEEQGITPIILVNKVDEGINLRVDSFIKIYEYLGYRVIKTSVVTLQGIDEVKKIIKNSRTSFIGQSGVGKSSLINVIDLNASQAINEISYKYARGRHTTVYAVAFHSDNKILIDTPGIKEFGIEGLGYLELKYYFKEFKYFNDLCRFNSCLHINEPNCFVISQIGFKIAEARYNSYLKIFSELKRYKSYAREIFGKN</sequence>